<proteinExistence type="inferred from homology"/>
<evidence type="ECO:0000250" key="1">
    <source>
        <dbReference type="UniProtKB" id="Q52087"/>
    </source>
</evidence>
<evidence type="ECO:0000250" key="2">
    <source>
        <dbReference type="UniProtKB" id="Q53464"/>
    </source>
</evidence>
<evidence type="ECO:0000303" key="3">
    <source>
    </source>
</evidence>
<evidence type="ECO:0000305" key="4"/>
<geneLocation type="plasmid">
    <name>pUOH109</name>
</geneLocation>
<keyword id="KW-0378">Hydrolase</keyword>
<keyword id="KW-0614">Plasmid</keyword>
<reference key="1">
    <citation type="journal article" date="1994" name="Biosci. Biotechnol. Biochem.">
        <title>Cloning and sequence analysis of a plasmid-encoded 2-haloacid dehalogenase gene from Pseudomonas putida No. 109.</title>
        <authorList>
            <person name="Kawasaki H."/>
            <person name="Toyama T."/>
            <person name="Maeda T."/>
            <person name="Nishino H."/>
            <person name="Tonomura K."/>
        </authorList>
    </citation>
    <scope>NUCLEOTIDE SEQUENCE [GENOMIC DNA]</scope>
    <source>
        <strain>109</strain>
    </source>
</reference>
<comment type="function">
    <text evidence="1">Catalyzes the hydrolytic dehalogenation of small (S)-2-haloalkanoic acids to yield the corresponding (R)-2-hydroxyalkanoic acids (By similarity). Acts on acids of short chain lengths, C(2) to C(4), with inversion of configuration at C-2 (By similarity). Active with 2-halogenated carboxylic acids and converts only the S-isomer (or L-isomer) of 2-chloropropionic acid with inversion of configuration to produce R-lactate (or D-isomer) (By similarity).</text>
</comment>
<comment type="catalytic activity">
    <reaction evidence="1">
        <text>an (S)-2-haloacid + H2O = a (2R)-2-hydroxycarboxylate + a halide anion + H(+)</text>
        <dbReference type="Rhea" id="RHEA:11192"/>
        <dbReference type="ChEBI" id="CHEBI:15377"/>
        <dbReference type="ChEBI" id="CHEBI:15378"/>
        <dbReference type="ChEBI" id="CHEBI:16042"/>
        <dbReference type="ChEBI" id="CHEBI:58314"/>
        <dbReference type="ChEBI" id="CHEBI:137405"/>
        <dbReference type="EC" id="3.8.1.2"/>
    </reaction>
</comment>
<comment type="catalytic activity">
    <reaction evidence="2">
        <text>(S)-2-chloropropanoate + H2O = (R)-lactate + chloride + H(+)</text>
        <dbReference type="Rhea" id="RHEA:67956"/>
        <dbReference type="ChEBI" id="CHEBI:15377"/>
        <dbReference type="ChEBI" id="CHEBI:15378"/>
        <dbReference type="ChEBI" id="CHEBI:16004"/>
        <dbReference type="ChEBI" id="CHEBI:17996"/>
        <dbReference type="ChEBI" id="CHEBI:73934"/>
    </reaction>
</comment>
<comment type="biotechnology">
    <text evidence="4">(S)-2-haloacid dehalogenases may be used for the biodegradation of halogenated substances and their derivatives which are widely used as pesticides, herbicides and other industrial products.</text>
</comment>
<comment type="similarity">
    <text evidence="4">Belongs to the HAD-like hydrolase superfamily. S-2-haloalkanoic acid dehalogenase family.</text>
</comment>
<feature type="chain" id="PRO_0000079164" description="(S)-2-haloacid dehalogenase H-109">
    <location>
        <begin position="1"/>
        <end position="224"/>
    </location>
</feature>
<feature type="region of interest" description="Important for catalytic activity" evidence="2">
    <location>
        <begin position="175"/>
        <end position="180"/>
    </location>
</feature>
<feature type="active site" description="Nucleophile" evidence="2">
    <location>
        <position position="10"/>
    </location>
</feature>
<feature type="binding site" evidence="2">
    <location>
        <begin position="11"/>
        <end position="12"/>
    </location>
    <ligand>
        <name>an (S)-2-haloacid</name>
        <dbReference type="ChEBI" id="CHEBI:137405"/>
    </ligand>
</feature>
<feature type="binding site" evidence="2">
    <location>
        <position position="41"/>
    </location>
    <ligand>
        <name>an (S)-2-haloacid</name>
        <dbReference type="ChEBI" id="CHEBI:137405"/>
    </ligand>
</feature>
<feature type="binding site" evidence="2">
    <location>
        <begin position="118"/>
        <end position="119"/>
    </location>
    <ligand>
        <name>an (S)-2-haloacid</name>
        <dbReference type="ChEBI" id="CHEBI:137405"/>
    </ligand>
</feature>
<feature type="site" description="Important for catalytic activity" evidence="2">
    <location>
        <position position="14"/>
    </location>
</feature>
<feature type="site" description="Important for catalytic activity" evidence="2">
    <location>
        <position position="151"/>
    </location>
</feature>
<feature type="site" description="Important for catalytic activity" evidence="2">
    <location>
        <position position="157"/>
    </location>
</feature>
<accession>Q59728</accession>
<gene>
    <name evidence="3" type="primary">dehH109</name>
</gene>
<protein>
    <recommendedName>
        <fullName evidence="4">(S)-2-haloacid dehalogenase H-109</fullName>
        <ecNumber evidence="1">3.8.1.2</ecNumber>
    </recommendedName>
    <alternativeName>
        <fullName>2-haloalkanoic acid dehalogenase H-109</fullName>
    </alternativeName>
    <alternativeName>
        <fullName>Halocarboxylic acid halidohydrolase H-109</fullName>
    </alternativeName>
    <alternativeName>
        <fullName evidence="3">L-2-haloacid dehalogenase H-109</fullName>
    </alternativeName>
</protein>
<organism>
    <name type="scientific">Pseudomonas putida</name>
    <name type="common">Arthrobacter siderocapsulatus</name>
    <dbReference type="NCBI Taxonomy" id="303"/>
    <lineage>
        <taxon>Bacteria</taxon>
        <taxon>Pseudomonadati</taxon>
        <taxon>Pseudomonadota</taxon>
        <taxon>Gammaproteobacteria</taxon>
        <taxon>Pseudomonadales</taxon>
        <taxon>Pseudomonadaceae</taxon>
        <taxon>Pseudomonas</taxon>
    </lineage>
</organism>
<dbReference type="EC" id="3.8.1.2" evidence="1"/>
<dbReference type="EMBL" id="D17523">
    <property type="protein sequence ID" value="BAA04474.1"/>
    <property type="molecule type" value="Genomic_DNA"/>
</dbReference>
<dbReference type="PIR" id="JC2075">
    <property type="entry name" value="JC2075"/>
</dbReference>
<dbReference type="RefSeq" id="WP_021703071.1">
    <property type="nucleotide sequence ID" value="NZ_RJAI01000086.1"/>
</dbReference>
<dbReference type="SMR" id="Q59728"/>
<dbReference type="GO" id="GO:0018784">
    <property type="term" value="F:(S)-2-haloacid dehalogenase activity"/>
    <property type="evidence" value="ECO:0007669"/>
    <property type="project" value="UniProtKB-EC"/>
</dbReference>
<dbReference type="CDD" id="cd02588">
    <property type="entry name" value="HAD_L2-DEX"/>
    <property type="match status" value="1"/>
</dbReference>
<dbReference type="Gene3D" id="3.40.50.1000">
    <property type="entry name" value="HAD superfamily/HAD-like"/>
    <property type="match status" value="1"/>
</dbReference>
<dbReference type="Gene3D" id="1.10.150.240">
    <property type="entry name" value="Putative phosphatase, domain 2"/>
    <property type="match status" value="1"/>
</dbReference>
<dbReference type="InterPro" id="IPR006328">
    <property type="entry name" value="2-HAD"/>
</dbReference>
<dbReference type="InterPro" id="IPR036412">
    <property type="entry name" value="HAD-like_sf"/>
</dbReference>
<dbReference type="InterPro" id="IPR006439">
    <property type="entry name" value="HAD-SF_hydro_IA"/>
</dbReference>
<dbReference type="InterPro" id="IPR023214">
    <property type="entry name" value="HAD_sf"/>
</dbReference>
<dbReference type="InterPro" id="IPR023198">
    <property type="entry name" value="PGP-like_dom2"/>
</dbReference>
<dbReference type="InterPro" id="IPR051540">
    <property type="entry name" value="S-2-haloacid_dehalogenase"/>
</dbReference>
<dbReference type="NCBIfam" id="TIGR01493">
    <property type="entry name" value="HAD-SF-IA-v2"/>
    <property type="match status" value="1"/>
</dbReference>
<dbReference type="NCBIfam" id="TIGR01428">
    <property type="entry name" value="HAD_type_II"/>
    <property type="match status" value="1"/>
</dbReference>
<dbReference type="PANTHER" id="PTHR43316:SF3">
    <property type="entry name" value="HALOACID DEHALOGENASE, TYPE II (AFU_ORTHOLOGUE AFUA_2G07750)-RELATED"/>
    <property type="match status" value="1"/>
</dbReference>
<dbReference type="PANTHER" id="PTHR43316">
    <property type="entry name" value="HYDROLASE, HALOACID DELAHOGENASE-RELATED"/>
    <property type="match status" value="1"/>
</dbReference>
<dbReference type="Pfam" id="PF00702">
    <property type="entry name" value="Hydrolase"/>
    <property type="match status" value="1"/>
</dbReference>
<dbReference type="PRINTS" id="PR00413">
    <property type="entry name" value="HADHALOGNASE"/>
</dbReference>
<dbReference type="SFLD" id="SFLDF00045">
    <property type="entry name" value="2-haloacid_dehalogenase"/>
    <property type="match status" value="1"/>
</dbReference>
<dbReference type="SFLD" id="SFLDG01129">
    <property type="entry name" value="C1.5:_HAD__Beta-PGM__Phosphata"/>
    <property type="match status" value="1"/>
</dbReference>
<dbReference type="SUPFAM" id="SSF56784">
    <property type="entry name" value="HAD-like"/>
    <property type="match status" value="1"/>
</dbReference>
<name>HAD9_PSEPU</name>
<sequence>MQPIEGIVFDLYGTLYDVHSVVQACESAYPGQGEAISRLWRQKQLEYTWLSSLMGRYASFEQRTEEALRYTCKHLGLATDETTLRQLGQAYLHLAPHPDTTAALRRLKASGLPMAIASNGSHHSIEQVVSHSDMGWAFDHLISVETVKVFKPDNRVYSLAEQTMAIPRDRLLFVSSNSWDATGARHFGFPVCWVNRQGAVFDELGATPTREVRDLGEMSDWLLD</sequence>